<reference key="1">
    <citation type="journal article" date="2009" name="J. Bacteriol.">
        <title>Complete genome sequence and comparative genome analysis of enteropathogenic Escherichia coli O127:H6 strain E2348/69.</title>
        <authorList>
            <person name="Iguchi A."/>
            <person name="Thomson N.R."/>
            <person name="Ogura Y."/>
            <person name="Saunders D."/>
            <person name="Ooka T."/>
            <person name="Henderson I.R."/>
            <person name="Harris D."/>
            <person name="Asadulghani M."/>
            <person name="Kurokawa K."/>
            <person name="Dean P."/>
            <person name="Kenny B."/>
            <person name="Quail M.A."/>
            <person name="Thurston S."/>
            <person name="Dougan G."/>
            <person name="Hayashi T."/>
            <person name="Parkhill J."/>
            <person name="Frankel G."/>
        </authorList>
    </citation>
    <scope>NUCLEOTIDE SEQUENCE [LARGE SCALE GENOMIC DNA]</scope>
    <source>
        <strain>E2348/69 / EPEC</strain>
    </source>
</reference>
<sequence length="327" mass="36612">MEAIKGSDVNVPDAVFAWMLDGRGGVKPLENTDVIDEAHPCWLHLNYVHHDSAQWLATTPLLPNNVRDALAGESTRPRVSRLGEGTLITLRCINGSTDERPDQLVAMRVYMDGRLIVSTRQRKVLALDDVVSDLEEGTGPTDCGGWLVDVCDALTDHSSEFIEQLHDKIIDLEDNLLDQQIPPRGFLALLRKQLIVMRRYMAPQRDVYARLASERLPWMSDDQRRRMQDIADRLGRGLDEIDACIARTGVMADEIAQVMQENLARRTYTMSLMAMVFLPSTFLTGLFGVNLGGIPGGGWQFGFSIFCILLVVLIGGVALWLHRSKWL</sequence>
<accession>B7URE7</accession>
<name>ZNTB_ECO27</name>
<dbReference type="EMBL" id="FM180568">
    <property type="protein sequence ID" value="CAS09082.1"/>
    <property type="molecule type" value="Genomic_DNA"/>
</dbReference>
<dbReference type="RefSeq" id="WP_000387388.1">
    <property type="nucleotide sequence ID" value="NC_011601.1"/>
</dbReference>
<dbReference type="SMR" id="B7URE7"/>
<dbReference type="GeneID" id="93775479"/>
<dbReference type="KEGG" id="ecg:E2348C_1534"/>
<dbReference type="HOGENOM" id="CLU_007127_2_0_6"/>
<dbReference type="Proteomes" id="UP000008205">
    <property type="component" value="Chromosome"/>
</dbReference>
<dbReference type="GO" id="GO:0005886">
    <property type="term" value="C:plasma membrane"/>
    <property type="evidence" value="ECO:0007669"/>
    <property type="project" value="UniProtKB-SubCell"/>
</dbReference>
<dbReference type="GO" id="GO:0050897">
    <property type="term" value="F:cobalt ion binding"/>
    <property type="evidence" value="ECO:0007669"/>
    <property type="project" value="TreeGrafter"/>
</dbReference>
<dbReference type="GO" id="GO:0015087">
    <property type="term" value="F:cobalt ion transmembrane transporter activity"/>
    <property type="evidence" value="ECO:0007669"/>
    <property type="project" value="TreeGrafter"/>
</dbReference>
<dbReference type="GO" id="GO:0000287">
    <property type="term" value="F:magnesium ion binding"/>
    <property type="evidence" value="ECO:0007669"/>
    <property type="project" value="TreeGrafter"/>
</dbReference>
<dbReference type="GO" id="GO:0015095">
    <property type="term" value="F:magnesium ion transmembrane transporter activity"/>
    <property type="evidence" value="ECO:0007669"/>
    <property type="project" value="TreeGrafter"/>
</dbReference>
<dbReference type="GO" id="GO:0005385">
    <property type="term" value="F:zinc ion transmembrane transporter activity"/>
    <property type="evidence" value="ECO:0007669"/>
    <property type="project" value="UniProtKB-UniRule"/>
</dbReference>
<dbReference type="CDD" id="cd12833">
    <property type="entry name" value="ZntB-like_1"/>
    <property type="match status" value="1"/>
</dbReference>
<dbReference type="FunFam" id="1.20.58.340:FF:000002">
    <property type="entry name" value="Zinc transport protein ZntB"/>
    <property type="match status" value="1"/>
</dbReference>
<dbReference type="FunFam" id="1.20.58.340:FF:000003">
    <property type="entry name" value="Zinc transport protein ZntB"/>
    <property type="match status" value="1"/>
</dbReference>
<dbReference type="FunFam" id="3.30.460.20:FF:000001">
    <property type="entry name" value="Zinc transport protein ZntB"/>
    <property type="match status" value="1"/>
</dbReference>
<dbReference type="Gene3D" id="3.30.460.20">
    <property type="entry name" value="CorA soluble domain-like"/>
    <property type="match status" value="1"/>
</dbReference>
<dbReference type="Gene3D" id="1.20.58.340">
    <property type="entry name" value="Magnesium transport protein CorA, transmembrane region"/>
    <property type="match status" value="2"/>
</dbReference>
<dbReference type="HAMAP" id="MF_01565">
    <property type="entry name" value="ZntB"/>
    <property type="match status" value="1"/>
</dbReference>
<dbReference type="InterPro" id="IPR045861">
    <property type="entry name" value="CorA_cytoplasmic_dom"/>
</dbReference>
<dbReference type="InterPro" id="IPR045863">
    <property type="entry name" value="CorA_TM1_TM2"/>
</dbReference>
<dbReference type="InterPro" id="IPR002523">
    <property type="entry name" value="MgTranspt_CorA/ZnTranspt_ZntB"/>
</dbReference>
<dbReference type="InterPro" id="IPR023714">
    <property type="entry name" value="Zn_transp_ZntB"/>
</dbReference>
<dbReference type="NCBIfam" id="NF007092">
    <property type="entry name" value="PRK09546.1"/>
    <property type="match status" value="1"/>
</dbReference>
<dbReference type="PANTHER" id="PTHR46494">
    <property type="entry name" value="CORA FAMILY METAL ION TRANSPORTER (EUROFUNG)"/>
    <property type="match status" value="1"/>
</dbReference>
<dbReference type="PANTHER" id="PTHR46494:SF3">
    <property type="entry name" value="ZINC TRANSPORT PROTEIN ZNTB"/>
    <property type="match status" value="1"/>
</dbReference>
<dbReference type="Pfam" id="PF01544">
    <property type="entry name" value="CorA"/>
    <property type="match status" value="1"/>
</dbReference>
<dbReference type="SUPFAM" id="SSF143865">
    <property type="entry name" value="CorA soluble domain-like"/>
    <property type="match status" value="1"/>
</dbReference>
<dbReference type="SUPFAM" id="SSF144083">
    <property type="entry name" value="Magnesium transport protein CorA, transmembrane region"/>
    <property type="match status" value="1"/>
</dbReference>
<feature type="chain" id="PRO_1000185451" description="Zinc transport protein ZntB">
    <location>
        <begin position="1"/>
        <end position="327"/>
    </location>
</feature>
<feature type="topological domain" description="Cytoplasmic" evidence="1">
    <location>
        <begin position="1"/>
        <end position="273"/>
    </location>
</feature>
<feature type="transmembrane region" description="Helical" evidence="1">
    <location>
        <begin position="274"/>
        <end position="294"/>
    </location>
</feature>
<feature type="topological domain" description="Periplasmic" evidence="1">
    <location>
        <begin position="295"/>
        <end position="300"/>
    </location>
</feature>
<feature type="transmembrane region" description="Helical" evidence="1">
    <location>
        <begin position="301"/>
        <end position="321"/>
    </location>
</feature>
<feature type="topological domain" description="Cytoplasmic" evidence="1">
    <location>
        <begin position="322"/>
        <end position="327"/>
    </location>
</feature>
<evidence type="ECO:0000255" key="1">
    <source>
        <dbReference type="HAMAP-Rule" id="MF_01565"/>
    </source>
</evidence>
<keyword id="KW-0997">Cell inner membrane</keyword>
<keyword id="KW-1003">Cell membrane</keyword>
<keyword id="KW-0406">Ion transport</keyword>
<keyword id="KW-0472">Membrane</keyword>
<keyword id="KW-1185">Reference proteome</keyword>
<keyword id="KW-0812">Transmembrane</keyword>
<keyword id="KW-1133">Transmembrane helix</keyword>
<keyword id="KW-0813">Transport</keyword>
<keyword id="KW-0862">Zinc</keyword>
<organism>
    <name type="scientific">Escherichia coli O127:H6 (strain E2348/69 / EPEC)</name>
    <dbReference type="NCBI Taxonomy" id="574521"/>
    <lineage>
        <taxon>Bacteria</taxon>
        <taxon>Pseudomonadati</taxon>
        <taxon>Pseudomonadota</taxon>
        <taxon>Gammaproteobacteria</taxon>
        <taxon>Enterobacterales</taxon>
        <taxon>Enterobacteriaceae</taxon>
        <taxon>Escherichia</taxon>
    </lineage>
</organism>
<gene>
    <name evidence="1" type="primary">zntB</name>
    <name type="ordered locus">E2348C_1534</name>
</gene>
<protein>
    <recommendedName>
        <fullName evidence="1">Zinc transport protein ZntB</fullName>
    </recommendedName>
</protein>
<comment type="function">
    <text evidence="1">Zinc transporter. Acts as a Zn(2+):proton symporter, which likely mediates zinc ion uptake.</text>
</comment>
<comment type="catalytic activity">
    <reaction evidence="1">
        <text>Zn(2+)(out) + H(+)(out) = Zn(2+)(in) + H(+)(in)</text>
        <dbReference type="Rhea" id="RHEA:71195"/>
        <dbReference type="ChEBI" id="CHEBI:15378"/>
        <dbReference type="ChEBI" id="CHEBI:29105"/>
    </reaction>
    <physiologicalReaction direction="left-to-right" evidence="1">
        <dbReference type="Rhea" id="RHEA:71196"/>
    </physiologicalReaction>
</comment>
<comment type="subcellular location">
    <subcellularLocation>
        <location evidence="1">Cell inner membrane</location>
        <topology evidence="1">Multi-pass membrane protein</topology>
    </subcellularLocation>
</comment>
<comment type="similarity">
    <text evidence="1">Belongs to the CorA metal ion transporter (MIT) (TC 1.A.35) family.</text>
</comment>
<proteinExistence type="inferred from homology"/>